<keyword id="KW-0027">Amidation</keyword>
<keyword id="KW-0903">Direct protein sequencing</keyword>
<keyword id="KW-0527">Neuropeptide</keyword>
<keyword id="KW-0964">Secreted</keyword>
<dbReference type="GO" id="GO:0005576">
    <property type="term" value="C:extracellular region"/>
    <property type="evidence" value="ECO:0007669"/>
    <property type="project" value="UniProtKB-SubCell"/>
</dbReference>
<dbReference type="GO" id="GO:0007218">
    <property type="term" value="P:neuropeptide signaling pathway"/>
    <property type="evidence" value="ECO:0007669"/>
    <property type="project" value="UniProtKB-KW"/>
</dbReference>
<protein>
    <recommendedName>
        <fullName evidence="4">Extended FMRFamide-3</fullName>
        <shortName evidence="4">FMRFa-3</shortName>
    </recommendedName>
</protein>
<sequence>GPESAFLRL</sequence>
<name>FAR3_STRNA</name>
<proteinExistence type="evidence at protein level"/>
<comment type="function">
    <text evidence="1">FMRFamides and FMRFamide-like peptides are neuropeptides.</text>
</comment>
<comment type="subcellular location">
    <subcellularLocation>
        <location evidence="6">Secreted</location>
    </subcellularLocation>
</comment>
<comment type="similarity">
    <text evidence="2">Belongs to the FARP (FMRF amide related peptide) family.</text>
</comment>
<accession>B0M3A2</accession>
<reference evidence="5" key="1">
    <citation type="journal article" date="2012" name="Syst. Biol.">
        <title>Peptidomics-based phylogeny and biogeography of Mantophasmatodea (Hexapoda).</title>
        <authorList>
            <person name="Predel R."/>
            <person name="Neupert S."/>
            <person name="Huetteroth W."/>
            <person name="Kahnt J."/>
            <person name="Waidelich D."/>
            <person name="Roth S."/>
        </authorList>
    </citation>
    <scope>PROTEIN SEQUENCE</scope>
    <scope>AMIDATION AT LEU-9</scope>
    <source>
        <tissue evidence="3">Thoracic perisympathetic organs</tissue>
    </source>
</reference>
<evidence type="ECO:0000250" key="1">
    <source>
        <dbReference type="UniProtKB" id="P34405"/>
    </source>
</evidence>
<evidence type="ECO:0000255" key="2"/>
<evidence type="ECO:0000269" key="3">
    <source>
    </source>
</evidence>
<evidence type="ECO:0000303" key="4">
    <source>
    </source>
</evidence>
<evidence type="ECO:0000305" key="5"/>
<evidence type="ECO:0000305" key="6">
    <source>
    </source>
</evidence>
<feature type="peptide" id="PRO_0000420740" description="Extended FMRFamide-3" evidence="3">
    <location>
        <begin position="1"/>
        <end position="9"/>
    </location>
</feature>
<feature type="modified residue" description="Leucine amide" evidence="3">
    <location>
        <position position="9"/>
    </location>
</feature>
<feature type="unsure residue" description="L or I" evidence="3">
    <location>
        <position position="7"/>
    </location>
</feature>
<feature type="unsure residue" description="L or I" evidence="3">
    <location>
        <position position="9"/>
    </location>
</feature>
<organism>
    <name type="scientific">Striatophasma naukluftense</name>
    <name type="common">Gladiator</name>
    <name type="synonym">Heel-walker</name>
    <dbReference type="NCBI Taxonomy" id="1041429"/>
    <lineage>
        <taxon>Eukaryota</taxon>
        <taxon>Metazoa</taxon>
        <taxon>Ecdysozoa</taxon>
        <taxon>Arthropoda</taxon>
        <taxon>Hexapoda</taxon>
        <taxon>Insecta</taxon>
        <taxon>Pterygota</taxon>
        <taxon>Neoptera</taxon>
        <taxon>Polyneoptera</taxon>
        <taxon>Mantophasmatodea</taxon>
        <taxon>Austrophasmatidae</taxon>
        <taxon>Striatophasma</taxon>
    </lineage>
</organism>